<organism>
    <name type="scientific">Staphylococcus aureus (strain N315)</name>
    <dbReference type="NCBI Taxonomy" id="158879"/>
    <lineage>
        <taxon>Bacteria</taxon>
        <taxon>Bacillati</taxon>
        <taxon>Bacillota</taxon>
        <taxon>Bacilli</taxon>
        <taxon>Bacillales</taxon>
        <taxon>Staphylococcaceae</taxon>
        <taxon>Staphylococcus</taxon>
    </lineage>
</organism>
<gene>
    <name evidence="1" type="primary">lacA</name>
    <name type="ordered locus">SA1997</name>
</gene>
<keyword id="KW-0413">Isomerase</keyword>
<keyword id="KW-0423">Lactose metabolism</keyword>
<protein>
    <recommendedName>
        <fullName evidence="1">Galactose-6-phosphate isomerase subunit LacA</fullName>
        <ecNumber evidence="1">5.3.1.26</ecNumber>
    </recommendedName>
</protein>
<sequence>MAIIIGSDEAGKRLKEVIKSYLLDNKYDVVDVTEGQEVDFVDATLAVAKDVQSQEGNLGIVIDAFGAGSFMVATKIKGMIAAEVSDERSGYMTRGHNNSRMITMGSEIVGDTLAKNVVKGFVEGKYDGGRHQIRVDMLNKMC</sequence>
<proteinExistence type="inferred from homology"/>
<reference key="1">
    <citation type="journal article" date="2001" name="Lancet">
        <title>Whole genome sequencing of meticillin-resistant Staphylococcus aureus.</title>
        <authorList>
            <person name="Kuroda M."/>
            <person name="Ohta T."/>
            <person name="Uchiyama I."/>
            <person name="Baba T."/>
            <person name="Yuzawa H."/>
            <person name="Kobayashi I."/>
            <person name="Cui L."/>
            <person name="Oguchi A."/>
            <person name="Aoki K."/>
            <person name="Nagai Y."/>
            <person name="Lian J.-Q."/>
            <person name="Ito T."/>
            <person name="Kanamori M."/>
            <person name="Matsumaru H."/>
            <person name="Maruyama A."/>
            <person name="Murakami H."/>
            <person name="Hosoyama A."/>
            <person name="Mizutani-Ui Y."/>
            <person name="Takahashi N.K."/>
            <person name="Sawano T."/>
            <person name="Inoue R."/>
            <person name="Kaito C."/>
            <person name="Sekimizu K."/>
            <person name="Hirakawa H."/>
            <person name="Kuhara S."/>
            <person name="Goto S."/>
            <person name="Yabuzaki J."/>
            <person name="Kanehisa M."/>
            <person name="Yamashita A."/>
            <person name="Oshima K."/>
            <person name="Furuya K."/>
            <person name="Yoshino C."/>
            <person name="Shiba T."/>
            <person name="Hattori M."/>
            <person name="Ogasawara N."/>
            <person name="Hayashi H."/>
            <person name="Hiramatsu K."/>
        </authorList>
    </citation>
    <scope>NUCLEOTIDE SEQUENCE [LARGE SCALE GENOMIC DNA]</scope>
    <source>
        <strain>N315</strain>
    </source>
</reference>
<dbReference type="EC" id="5.3.1.26" evidence="1"/>
<dbReference type="EMBL" id="BA000018">
    <property type="protein sequence ID" value="BAB43287.1"/>
    <property type="molecule type" value="Genomic_DNA"/>
</dbReference>
<dbReference type="PIR" id="F90015">
    <property type="entry name" value="F90015"/>
</dbReference>
<dbReference type="RefSeq" id="WP_000974608.1">
    <property type="nucleotide sequence ID" value="NC_002745.2"/>
</dbReference>
<dbReference type="SMR" id="P65251"/>
<dbReference type="EnsemblBacteria" id="BAB43287">
    <property type="protein sequence ID" value="BAB43287"/>
    <property type="gene ID" value="BAB43287"/>
</dbReference>
<dbReference type="GeneID" id="98347039"/>
<dbReference type="KEGG" id="sau:SA1997"/>
<dbReference type="HOGENOM" id="CLU_091396_4_2_9"/>
<dbReference type="UniPathway" id="UPA00702">
    <property type="reaction ID" value="UER00714"/>
</dbReference>
<dbReference type="GO" id="GO:0050044">
    <property type="term" value="F:galactose-6-phosphate isomerase activity"/>
    <property type="evidence" value="ECO:0007669"/>
    <property type="project" value="UniProtKB-UniRule"/>
</dbReference>
<dbReference type="GO" id="GO:0004751">
    <property type="term" value="F:ribose-5-phosphate isomerase activity"/>
    <property type="evidence" value="ECO:0007669"/>
    <property type="project" value="TreeGrafter"/>
</dbReference>
<dbReference type="GO" id="GO:0019316">
    <property type="term" value="P:D-allose catabolic process"/>
    <property type="evidence" value="ECO:0007669"/>
    <property type="project" value="TreeGrafter"/>
</dbReference>
<dbReference type="GO" id="GO:0019388">
    <property type="term" value="P:galactose catabolic process"/>
    <property type="evidence" value="ECO:0007669"/>
    <property type="project" value="UniProtKB-UniPathway"/>
</dbReference>
<dbReference type="GO" id="GO:0019512">
    <property type="term" value="P:lactose catabolic process via tagatose-6-phosphate"/>
    <property type="evidence" value="ECO:0007669"/>
    <property type="project" value="UniProtKB-UniRule"/>
</dbReference>
<dbReference type="GO" id="GO:0009052">
    <property type="term" value="P:pentose-phosphate shunt, non-oxidative branch"/>
    <property type="evidence" value="ECO:0007669"/>
    <property type="project" value="TreeGrafter"/>
</dbReference>
<dbReference type="Gene3D" id="3.40.1400.10">
    <property type="entry name" value="Sugar-phosphate isomerase, RpiB/LacA/LacB"/>
    <property type="match status" value="1"/>
</dbReference>
<dbReference type="HAMAP" id="MF_01555">
    <property type="entry name" value="LacA"/>
    <property type="match status" value="1"/>
</dbReference>
<dbReference type="InterPro" id="IPR004783">
    <property type="entry name" value="LacA"/>
</dbReference>
<dbReference type="InterPro" id="IPR003500">
    <property type="entry name" value="RpiB_LacA_LacB"/>
</dbReference>
<dbReference type="InterPro" id="IPR036569">
    <property type="entry name" value="RpiB_LacA_LacB_sf"/>
</dbReference>
<dbReference type="NCBIfam" id="TIGR01118">
    <property type="entry name" value="lacA"/>
    <property type="match status" value="1"/>
</dbReference>
<dbReference type="NCBIfam" id="NF006380">
    <property type="entry name" value="PRK08621.1"/>
    <property type="match status" value="1"/>
</dbReference>
<dbReference type="NCBIfam" id="TIGR00689">
    <property type="entry name" value="rpiB_lacA_lacB"/>
    <property type="match status" value="1"/>
</dbReference>
<dbReference type="PANTHER" id="PTHR30345:SF5">
    <property type="entry name" value="GALACTOSE-6-PHOSPHATE ISOMERASE SUBUNIT LACA"/>
    <property type="match status" value="1"/>
</dbReference>
<dbReference type="PANTHER" id="PTHR30345">
    <property type="entry name" value="RIBOSE-5-PHOSPHATE ISOMERASE B"/>
    <property type="match status" value="1"/>
</dbReference>
<dbReference type="Pfam" id="PF02502">
    <property type="entry name" value="LacAB_rpiB"/>
    <property type="match status" value="1"/>
</dbReference>
<dbReference type="PIRSF" id="PIRSF005384">
    <property type="entry name" value="RpiB_LacA_B"/>
    <property type="match status" value="1"/>
</dbReference>
<dbReference type="SUPFAM" id="SSF89623">
    <property type="entry name" value="Ribose/Galactose isomerase RpiB/AlsB"/>
    <property type="match status" value="1"/>
</dbReference>
<name>LACA_STAAN</name>
<feature type="chain" id="PRO_0000208111" description="Galactose-6-phosphate isomerase subunit LacA">
    <location>
        <begin position="1"/>
        <end position="142"/>
    </location>
</feature>
<accession>P65251</accession>
<accession>Q99S74</accession>
<comment type="catalytic activity">
    <reaction evidence="1">
        <text>aldehydo-D-galactose 6-phosphate = keto-D-tagatose 6-phosphate</text>
        <dbReference type="Rhea" id="RHEA:13033"/>
        <dbReference type="ChEBI" id="CHEBI:58255"/>
        <dbReference type="ChEBI" id="CHEBI:134283"/>
        <dbReference type="EC" id="5.3.1.26"/>
    </reaction>
</comment>
<comment type="pathway">
    <text evidence="1">Carbohydrate metabolism; D-galactose 6-phosphate degradation; D-tagatose 6-phosphate from D-galactose 6-phosphate: step 1/1.</text>
</comment>
<comment type="subunit">
    <text evidence="1">Heteromultimeric protein consisting of LacA and LacB.</text>
</comment>
<comment type="similarity">
    <text evidence="1">Belongs to the LacAB/RpiB family.</text>
</comment>
<evidence type="ECO:0000255" key="1">
    <source>
        <dbReference type="HAMAP-Rule" id="MF_01555"/>
    </source>
</evidence>